<protein>
    <recommendedName>
        <fullName evidence="1">UDP-N-acetylenolpyruvoylglucosamine reductase</fullName>
        <ecNumber evidence="1">1.3.1.98</ecNumber>
    </recommendedName>
    <alternativeName>
        <fullName evidence="1">UDP-N-acetylmuramate dehydrogenase</fullName>
    </alternativeName>
</protein>
<sequence>MELLDLKKQGINIKEQIPLSRYTFTKTGGEAEYLAFPKSTDEVEKLVKVTRENKIPLTIIGNASNLIIRDGGIDGLVIILTDLKEIKVKDNKVTADAGAKIVDTAFTAAHHGLSGMEFAAGIPGSIGGGVFMNAGAYGGEMQEVVESVKVLTRAGEFKTYSNKEMEFSYRHSLVQDNGDIVLSATFSLTPGNKLEILDHMHYLNALRRYKQPVEYPSCGSVFKRPTGHFVGPMIIKAGLQGKQVGGAQDSTKHAGFIVNKGGATATDYLNLIHLIQKVIKEKYDIDLHTEVRIIGKEK</sequence>
<proteinExistence type="inferred from homology"/>
<keyword id="KW-0131">Cell cycle</keyword>
<keyword id="KW-0132">Cell division</keyword>
<keyword id="KW-0133">Cell shape</keyword>
<keyword id="KW-0961">Cell wall biogenesis/degradation</keyword>
<keyword id="KW-0963">Cytoplasm</keyword>
<keyword id="KW-0274">FAD</keyword>
<keyword id="KW-0285">Flavoprotein</keyword>
<keyword id="KW-0521">NADP</keyword>
<keyword id="KW-0560">Oxidoreductase</keyword>
<keyword id="KW-0573">Peptidoglycan synthesis</keyword>
<dbReference type="EC" id="1.3.1.98" evidence="1"/>
<dbReference type="EMBL" id="CP000517">
    <property type="protein sequence ID" value="ABX26889.1"/>
    <property type="molecule type" value="Genomic_DNA"/>
</dbReference>
<dbReference type="RefSeq" id="WP_012211637.1">
    <property type="nucleotide sequence ID" value="NC_010080.1"/>
</dbReference>
<dbReference type="SMR" id="A8YUF1"/>
<dbReference type="KEGG" id="lhe:lhv_0752"/>
<dbReference type="eggNOG" id="COG0812">
    <property type="taxonomic scope" value="Bacteria"/>
</dbReference>
<dbReference type="HOGENOM" id="CLU_035304_1_1_9"/>
<dbReference type="UniPathway" id="UPA00219"/>
<dbReference type="Proteomes" id="UP000000790">
    <property type="component" value="Chromosome"/>
</dbReference>
<dbReference type="GO" id="GO:0005829">
    <property type="term" value="C:cytosol"/>
    <property type="evidence" value="ECO:0007669"/>
    <property type="project" value="TreeGrafter"/>
</dbReference>
<dbReference type="GO" id="GO:0071949">
    <property type="term" value="F:FAD binding"/>
    <property type="evidence" value="ECO:0007669"/>
    <property type="project" value="InterPro"/>
</dbReference>
<dbReference type="GO" id="GO:0008762">
    <property type="term" value="F:UDP-N-acetylmuramate dehydrogenase activity"/>
    <property type="evidence" value="ECO:0007669"/>
    <property type="project" value="UniProtKB-UniRule"/>
</dbReference>
<dbReference type="GO" id="GO:0051301">
    <property type="term" value="P:cell division"/>
    <property type="evidence" value="ECO:0007669"/>
    <property type="project" value="UniProtKB-KW"/>
</dbReference>
<dbReference type="GO" id="GO:0071555">
    <property type="term" value="P:cell wall organization"/>
    <property type="evidence" value="ECO:0007669"/>
    <property type="project" value="UniProtKB-KW"/>
</dbReference>
<dbReference type="GO" id="GO:0009252">
    <property type="term" value="P:peptidoglycan biosynthetic process"/>
    <property type="evidence" value="ECO:0007669"/>
    <property type="project" value="UniProtKB-UniRule"/>
</dbReference>
<dbReference type="GO" id="GO:0008360">
    <property type="term" value="P:regulation of cell shape"/>
    <property type="evidence" value="ECO:0007669"/>
    <property type="project" value="UniProtKB-KW"/>
</dbReference>
<dbReference type="Gene3D" id="3.30.465.10">
    <property type="match status" value="1"/>
</dbReference>
<dbReference type="Gene3D" id="3.90.78.10">
    <property type="entry name" value="UDP-N-acetylenolpyruvoylglucosamine reductase, C-terminal domain"/>
    <property type="match status" value="1"/>
</dbReference>
<dbReference type="Gene3D" id="3.30.43.10">
    <property type="entry name" value="Uridine Diphospho-n-acetylenolpyruvylglucosamine Reductase, domain 2"/>
    <property type="match status" value="1"/>
</dbReference>
<dbReference type="HAMAP" id="MF_00037">
    <property type="entry name" value="MurB"/>
    <property type="match status" value="1"/>
</dbReference>
<dbReference type="InterPro" id="IPR016166">
    <property type="entry name" value="FAD-bd_PCMH"/>
</dbReference>
<dbReference type="InterPro" id="IPR036318">
    <property type="entry name" value="FAD-bd_PCMH-like_sf"/>
</dbReference>
<dbReference type="InterPro" id="IPR016167">
    <property type="entry name" value="FAD-bd_PCMH_sub1"/>
</dbReference>
<dbReference type="InterPro" id="IPR016169">
    <property type="entry name" value="FAD-bd_PCMH_sub2"/>
</dbReference>
<dbReference type="InterPro" id="IPR003170">
    <property type="entry name" value="MurB"/>
</dbReference>
<dbReference type="InterPro" id="IPR011601">
    <property type="entry name" value="MurB_C"/>
</dbReference>
<dbReference type="InterPro" id="IPR036635">
    <property type="entry name" value="MurB_C_sf"/>
</dbReference>
<dbReference type="InterPro" id="IPR006094">
    <property type="entry name" value="Oxid_FAD_bind_N"/>
</dbReference>
<dbReference type="NCBIfam" id="TIGR00179">
    <property type="entry name" value="murB"/>
    <property type="match status" value="1"/>
</dbReference>
<dbReference type="NCBIfam" id="NF010480">
    <property type="entry name" value="PRK13905.1"/>
    <property type="match status" value="1"/>
</dbReference>
<dbReference type="PANTHER" id="PTHR21071">
    <property type="entry name" value="UDP-N-ACETYLENOLPYRUVOYLGLUCOSAMINE REDUCTASE"/>
    <property type="match status" value="1"/>
</dbReference>
<dbReference type="PANTHER" id="PTHR21071:SF4">
    <property type="entry name" value="UDP-N-ACETYLENOLPYRUVOYLGLUCOSAMINE REDUCTASE"/>
    <property type="match status" value="1"/>
</dbReference>
<dbReference type="Pfam" id="PF01565">
    <property type="entry name" value="FAD_binding_4"/>
    <property type="match status" value="1"/>
</dbReference>
<dbReference type="Pfam" id="PF02873">
    <property type="entry name" value="MurB_C"/>
    <property type="match status" value="1"/>
</dbReference>
<dbReference type="SUPFAM" id="SSF56176">
    <property type="entry name" value="FAD-binding/transporter-associated domain-like"/>
    <property type="match status" value="1"/>
</dbReference>
<dbReference type="SUPFAM" id="SSF56194">
    <property type="entry name" value="Uridine diphospho-N-Acetylenolpyruvylglucosamine reductase, MurB, C-terminal domain"/>
    <property type="match status" value="1"/>
</dbReference>
<dbReference type="PROSITE" id="PS51387">
    <property type="entry name" value="FAD_PCMH"/>
    <property type="match status" value="1"/>
</dbReference>
<reference key="1">
    <citation type="journal article" date="2008" name="J. Bacteriol.">
        <title>Genome sequence of Lactobacillus helveticus: an organism distinguished by selective gene loss and IS element expansion.</title>
        <authorList>
            <person name="Callanan M."/>
            <person name="Kaleta P."/>
            <person name="O'Callaghan J."/>
            <person name="O'Sullivan O."/>
            <person name="Jordan K."/>
            <person name="McAuliffe O."/>
            <person name="Sangrador-Vegas A."/>
            <person name="Slattery L."/>
            <person name="Fitzgerald G.F."/>
            <person name="Beresford T."/>
            <person name="Ross R.P."/>
        </authorList>
    </citation>
    <scope>NUCLEOTIDE SEQUENCE [LARGE SCALE GENOMIC DNA]</scope>
    <source>
        <strain>DPC 4571</strain>
    </source>
</reference>
<evidence type="ECO:0000255" key="1">
    <source>
        <dbReference type="HAMAP-Rule" id="MF_00037"/>
    </source>
</evidence>
<accession>A8YUF1</accession>
<gene>
    <name evidence="1" type="primary">murB</name>
    <name type="ordered locus">lhv_0752</name>
</gene>
<feature type="chain" id="PRO_1000071040" description="UDP-N-acetylenolpyruvoylglucosamine reductase">
    <location>
        <begin position="1"/>
        <end position="298"/>
    </location>
</feature>
<feature type="domain" description="FAD-binding PCMH-type" evidence="1">
    <location>
        <begin position="26"/>
        <end position="191"/>
    </location>
</feature>
<feature type="active site" evidence="1">
    <location>
        <position position="170"/>
    </location>
</feature>
<feature type="active site" description="Proton donor" evidence="1">
    <location>
        <position position="220"/>
    </location>
</feature>
<feature type="active site" evidence="1">
    <location>
        <position position="290"/>
    </location>
</feature>
<comment type="function">
    <text evidence="1">Cell wall formation.</text>
</comment>
<comment type="catalytic activity">
    <reaction evidence="1">
        <text>UDP-N-acetyl-alpha-D-muramate + NADP(+) = UDP-N-acetyl-3-O-(1-carboxyvinyl)-alpha-D-glucosamine + NADPH + H(+)</text>
        <dbReference type="Rhea" id="RHEA:12248"/>
        <dbReference type="ChEBI" id="CHEBI:15378"/>
        <dbReference type="ChEBI" id="CHEBI:57783"/>
        <dbReference type="ChEBI" id="CHEBI:58349"/>
        <dbReference type="ChEBI" id="CHEBI:68483"/>
        <dbReference type="ChEBI" id="CHEBI:70757"/>
        <dbReference type="EC" id="1.3.1.98"/>
    </reaction>
</comment>
<comment type="cofactor">
    <cofactor evidence="1">
        <name>FAD</name>
        <dbReference type="ChEBI" id="CHEBI:57692"/>
    </cofactor>
</comment>
<comment type="pathway">
    <text evidence="1">Cell wall biogenesis; peptidoglycan biosynthesis.</text>
</comment>
<comment type="subcellular location">
    <subcellularLocation>
        <location evidence="1">Cytoplasm</location>
    </subcellularLocation>
</comment>
<comment type="similarity">
    <text evidence="1">Belongs to the MurB family.</text>
</comment>
<name>MURB_LACH4</name>
<organism>
    <name type="scientific">Lactobacillus helveticus (strain DPC 4571)</name>
    <dbReference type="NCBI Taxonomy" id="405566"/>
    <lineage>
        <taxon>Bacteria</taxon>
        <taxon>Bacillati</taxon>
        <taxon>Bacillota</taxon>
        <taxon>Bacilli</taxon>
        <taxon>Lactobacillales</taxon>
        <taxon>Lactobacillaceae</taxon>
        <taxon>Lactobacillus</taxon>
    </lineage>
</organism>